<proteinExistence type="inferred from homology"/>
<feature type="chain" id="PRO_1000124491" description="Transcriptional repressor NrdR">
    <location>
        <begin position="1"/>
        <end position="180"/>
    </location>
</feature>
<feature type="domain" description="ATP-cone" evidence="1">
    <location>
        <begin position="49"/>
        <end position="139"/>
    </location>
</feature>
<feature type="zinc finger region" evidence="1">
    <location>
        <begin position="3"/>
        <end position="34"/>
    </location>
</feature>
<feature type="region of interest" description="Disordered" evidence="2">
    <location>
        <begin position="148"/>
        <end position="180"/>
    </location>
</feature>
<feature type="compositionally biased region" description="Polar residues" evidence="2">
    <location>
        <begin position="171"/>
        <end position="180"/>
    </location>
</feature>
<evidence type="ECO:0000255" key="1">
    <source>
        <dbReference type="HAMAP-Rule" id="MF_00440"/>
    </source>
</evidence>
<evidence type="ECO:0000256" key="2">
    <source>
        <dbReference type="SAM" id="MobiDB-lite"/>
    </source>
</evidence>
<accession>B7KFG7</accession>
<name>NRDR_GLOC7</name>
<dbReference type="EMBL" id="CP001291">
    <property type="protein sequence ID" value="ACK71883.1"/>
    <property type="molecule type" value="Genomic_DNA"/>
</dbReference>
<dbReference type="RefSeq" id="WP_015955478.1">
    <property type="nucleotide sequence ID" value="NC_011729.1"/>
</dbReference>
<dbReference type="SMR" id="B7KFG7"/>
<dbReference type="STRING" id="65393.PCC7424_3491"/>
<dbReference type="KEGG" id="cyc:PCC7424_3491"/>
<dbReference type="eggNOG" id="COG1327">
    <property type="taxonomic scope" value="Bacteria"/>
</dbReference>
<dbReference type="HOGENOM" id="CLU_108412_0_0_3"/>
<dbReference type="OrthoDB" id="9807461at2"/>
<dbReference type="Proteomes" id="UP000002384">
    <property type="component" value="Chromosome"/>
</dbReference>
<dbReference type="GO" id="GO:0005524">
    <property type="term" value="F:ATP binding"/>
    <property type="evidence" value="ECO:0007669"/>
    <property type="project" value="UniProtKB-KW"/>
</dbReference>
<dbReference type="GO" id="GO:0003677">
    <property type="term" value="F:DNA binding"/>
    <property type="evidence" value="ECO:0007669"/>
    <property type="project" value="UniProtKB-KW"/>
</dbReference>
<dbReference type="GO" id="GO:0008270">
    <property type="term" value="F:zinc ion binding"/>
    <property type="evidence" value="ECO:0007669"/>
    <property type="project" value="UniProtKB-UniRule"/>
</dbReference>
<dbReference type="GO" id="GO:0045892">
    <property type="term" value="P:negative regulation of DNA-templated transcription"/>
    <property type="evidence" value="ECO:0007669"/>
    <property type="project" value="UniProtKB-UniRule"/>
</dbReference>
<dbReference type="HAMAP" id="MF_00440">
    <property type="entry name" value="NrdR"/>
    <property type="match status" value="1"/>
</dbReference>
<dbReference type="InterPro" id="IPR005144">
    <property type="entry name" value="ATP-cone_dom"/>
</dbReference>
<dbReference type="InterPro" id="IPR055173">
    <property type="entry name" value="NrdR-like_N"/>
</dbReference>
<dbReference type="InterPro" id="IPR003796">
    <property type="entry name" value="RNR_NrdR-like"/>
</dbReference>
<dbReference type="NCBIfam" id="TIGR00244">
    <property type="entry name" value="transcriptional regulator NrdR"/>
    <property type="match status" value="1"/>
</dbReference>
<dbReference type="PANTHER" id="PTHR30455">
    <property type="entry name" value="TRANSCRIPTIONAL REPRESSOR NRDR"/>
    <property type="match status" value="1"/>
</dbReference>
<dbReference type="PANTHER" id="PTHR30455:SF2">
    <property type="entry name" value="TRANSCRIPTIONAL REPRESSOR NRDR"/>
    <property type="match status" value="1"/>
</dbReference>
<dbReference type="Pfam" id="PF03477">
    <property type="entry name" value="ATP-cone"/>
    <property type="match status" value="1"/>
</dbReference>
<dbReference type="Pfam" id="PF22811">
    <property type="entry name" value="Zn_ribbon_NrdR"/>
    <property type="match status" value="1"/>
</dbReference>
<dbReference type="PROSITE" id="PS51161">
    <property type="entry name" value="ATP_CONE"/>
    <property type="match status" value="1"/>
</dbReference>
<sequence>MECPYCQNTSSRVLESRSTEAGQSIRRRRECLQCKHRFTTYERIEFVPISVLKKDKSKESFDRSKLLRGIVRACEKTEVSAQQIENVVEEIEARLQQSPRREITSQEIGQLVLQYLRELNEVAYIRFASVYGEFKGITDFVETLNQLQQEERESSSSPEWSDAGEEATVIEDSSQVMASS</sequence>
<organism>
    <name type="scientific">Gloeothece citriformis (strain PCC 7424)</name>
    <name type="common">Cyanothece sp. (strain PCC 7424)</name>
    <dbReference type="NCBI Taxonomy" id="65393"/>
    <lineage>
        <taxon>Bacteria</taxon>
        <taxon>Bacillati</taxon>
        <taxon>Cyanobacteriota</taxon>
        <taxon>Cyanophyceae</taxon>
        <taxon>Oscillatoriophycideae</taxon>
        <taxon>Chroococcales</taxon>
        <taxon>Aphanothecaceae</taxon>
        <taxon>Gloeothece</taxon>
        <taxon>Gloeothece citriformis</taxon>
    </lineage>
</organism>
<comment type="function">
    <text evidence="1">Negatively regulates transcription of bacterial ribonucleotide reductase nrd genes and operons by binding to NrdR-boxes.</text>
</comment>
<comment type="cofactor">
    <cofactor evidence="1">
        <name>Zn(2+)</name>
        <dbReference type="ChEBI" id="CHEBI:29105"/>
    </cofactor>
    <text evidence="1">Binds 1 zinc ion.</text>
</comment>
<comment type="similarity">
    <text evidence="1">Belongs to the NrdR family.</text>
</comment>
<reference key="1">
    <citation type="journal article" date="2011" name="MBio">
        <title>Novel metabolic attributes of the genus Cyanothece, comprising a group of unicellular nitrogen-fixing Cyanobacteria.</title>
        <authorList>
            <person name="Bandyopadhyay A."/>
            <person name="Elvitigala T."/>
            <person name="Welsh E."/>
            <person name="Stockel J."/>
            <person name="Liberton M."/>
            <person name="Min H."/>
            <person name="Sherman L.A."/>
            <person name="Pakrasi H.B."/>
        </authorList>
    </citation>
    <scope>NUCLEOTIDE SEQUENCE [LARGE SCALE GENOMIC DNA]</scope>
    <source>
        <strain>PCC 7424</strain>
    </source>
</reference>
<protein>
    <recommendedName>
        <fullName evidence="1">Transcriptional repressor NrdR</fullName>
    </recommendedName>
</protein>
<keyword id="KW-0067">ATP-binding</keyword>
<keyword id="KW-0238">DNA-binding</keyword>
<keyword id="KW-0479">Metal-binding</keyword>
<keyword id="KW-0547">Nucleotide-binding</keyword>
<keyword id="KW-1185">Reference proteome</keyword>
<keyword id="KW-0678">Repressor</keyword>
<keyword id="KW-0804">Transcription</keyword>
<keyword id="KW-0805">Transcription regulation</keyword>
<keyword id="KW-0862">Zinc</keyword>
<keyword id="KW-0863">Zinc-finger</keyword>
<gene>
    <name evidence="1" type="primary">nrdR</name>
    <name type="ordered locus">PCC7424_3491</name>
</gene>